<keyword id="KW-0002">3D-structure</keyword>
<keyword id="KW-0007">Acetylation</keyword>
<keyword id="KW-0143">Chaperone</keyword>
<keyword id="KW-0963">Cytoplasm</keyword>
<keyword id="KW-0496">Mitochondrion</keyword>
<keyword id="KW-0539">Nucleus</keyword>
<keyword id="KW-0597">Phosphoprotein</keyword>
<keyword id="KW-1267">Proteomics identification</keyword>
<keyword id="KW-1185">Reference proteome</keyword>
<protein>
    <recommendedName>
        <fullName>Prefoldin subunit 4</fullName>
    </recommendedName>
    <alternativeName>
        <fullName>Protein C-1</fullName>
    </alternativeName>
</protein>
<feature type="initiator methionine" description="Removed" evidence="7">
    <location>
        <position position="1"/>
    </location>
</feature>
<feature type="chain" id="PRO_0000124842" description="Prefoldin subunit 4">
    <location>
        <begin position="2"/>
        <end position="134"/>
    </location>
</feature>
<feature type="modified residue" description="N-acetylalanine" evidence="7">
    <location>
        <position position="2"/>
    </location>
</feature>
<feature type="modified residue" description="Phosphoserine" evidence="4 5 6">
    <location>
        <position position="125"/>
    </location>
</feature>
<dbReference type="EMBL" id="U41816">
    <property type="protein sequence ID" value="AAB17063.1"/>
    <property type="molecule type" value="mRNA"/>
</dbReference>
<dbReference type="EMBL" id="AL133335">
    <property type="status" value="NOT_ANNOTATED_CDS"/>
    <property type="molecule type" value="Genomic_DNA"/>
</dbReference>
<dbReference type="EMBL" id="BC010953">
    <property type="protein sequence ID" value="AAH10953.1"/>
    <property type="molecule type" value="mRNA"/>
</dbReference>
<dbReference type="CCDS" id="CCDS13445.1"/>
<dbReference type="RefSeq" id="NP_002614.2">
    <property type="nucleotide sequence ID" value="NM_002623.3"/>
</dbReference>
<dbReference type="PDB" id="6NR8">
    <property type="method" value="EM"/>
    <property type="resolution" value="7.80 A"/>
    <property type="chains" value="4=19-122"/>
</dbReference>
<dbReference type="PDB" id="6NR9">
    <property type="method" value="EM"/>
    <property type="resolution" value="8.50 A"/>
    <property type="chains" value="4=19-122"/>
</dbReference>
<dbReference type="PDB" id="6NRB">
    <property type="method" value="EM"/>
    <property type="resolution" value="8.70 A"/>
    <property type="chains" value="4=19-122"/>
</dbReference>
<dbReference type="PDB" id="6NRC">
    <property type="method" value="EM"/>
    <property type="resolution" value="8.30 A"/>
    <property type="chains" value="4=19-122"/>
</dbReference>
<dbReference type="PDB" id="6NRD">
    <property type="method" value="EM"/>
    <property type="resolution" value="8.20 A"/>
    <property type="chains" value="4=19-122"/>
</dbReference>
<dbReference type="PDB" id="7WU7">
    <property type="method" value="EM"/>
    <property type="resolution" value="3.85 A"/>
    <property type="chains" value="4=1-134"/>
</dbReference>
<dbReference type="PDBsum" id="6NR8"/>
<dbReference type="PDBsum" id="6NR9"/>
<dbReference type="PDBsum" id="6NRB"/>
<dbReference type="PDBsum" id="6NRC"/>
<dbReference type="PDBsum" id="6NRD"/>
<dbReference type="PDBsum" id="7WU7"/>
<dbReference type="EMDB" id="EMD-0490"/>
<dbReference type="EMDB" id="EMD-0491"/>
<dbReference type="EMDB" id="EMD-0493"/>
<dbReference type="EMDB" id="EMD-0494"/>
<dbReference type="EMDB" id="EMD-0495"/>
<dbReference type="EMDB" id="EMD-32823"/>
<dbReference type="SMR" id="Q9NQP4"/>
<dbReference type="BioGRID" id="111225">
    <property type="interactions" value="130"/>
</dbReference>
<dbReference type="ComplexPortal" id="CPX-6149">
    <property type="entry name" value="Prefoldin co-chaperone complex"/>
</dbReference>
<dbReference type="CORUM" id="Q9NQP4"/>
<dbReference type="FunCoup" id="Q9NQP4">
    <property type="interactions" value="3718"/>
</dbReference>
<dbReference type="IntAct" id="Q9NQP4">
    <property type="interactions" value="71"/>
</dbReference>
<dbReference type="MINT" id="Q9NQP4"/>
<dbReference type="STRING" id="9606.ENSP00000360473"/>
<dbReference type="GlyGen" id="Q9NQP4">
    <property type="glycosylation" value="1 site, 1 O-linked glycan (1 site)"/>
</dbReference>
<dbReference type="iPTMnet" id="Q9NQP4"/>
<dbReference type="PhosphoSitePlus" id="Q9NQP4"/>
<dbReference type="BioMuta" id="PFDN4"/>
<dbReference type="DMDM" id="12643815"/>
<dbReference type="jPOST" id="Q9NQP4"/>
<dbReference type="MassIVE" id="Q9NQP4"/>
<dbReference type="PaxDb" id="9606-ENSP00000360473"/>
<dbReference type="PeptideAtlas" id="Q9NQP4"/>
<dbReference type="ProteomicsDB" id="82167"/>
<dbReference type="Pumba" id="Q9NQP4"/>
<dbReference type="TopDownProteomics" id="Q9NQP4"/>
<dbReference type="Antibodypedia" id="13961">
    <property type="antibodies" value="163 antibodies from 23 providers"/>
</dbReference>
<dbReference type="DNASU" id="5203"/>
<dbReference type="Ensembl" id="ENST00000371419.7">
    <property type="protein sequence ID" value="ENSP00000360473.2"/>
    <property type="gene ID" value="ENSG00000101132.11"/>
</dbReference>
<dbReference type="Ensembl" id="ENST00000715725.2">
    <property type="protein sequence ID" value="ENSP00000520507.1"/>
    <property type="gene ID" value="ENSG00000101132.11"/>
</dbReference>
<dbReference type="GeneID" id="5203"/>
<dbReference type="KEGG" id="hsa:5203"/>
<dbReference type="MANE-Select" id="ENST00000371419.7">
    <property type="protein sequence ID" value="ENSP00000360473.2"/>
    <property type="RefSeq nucleotide sequence ID" value="NM_002623.4"/>
    <property type="RefSeq protein sequence ID" value="NP_002614.2"/>
</dbReference>
<dbReference type="UCSC" id="uc002xwx.4">
    <property type="organism name" value="human"/>
</dbReference>
<dbReference type="AGR" id="HGNC:8868"/>
<dbReference type="CTD" id="5203"/>
<dbReference type="DisGeNET" id="5203"/>
<dbReference type="GeneCards" id="PFDN4"/>
<dbReference type="HGNC" id="HGNC:8868">
    <property type="gene designation" value="PFDN4"/>
</dbReference>
<dbReference type="HPA" id="ENSG00000101132">
    <property type="expression patterns" value="Low tissue specificity"/>
</dbReference>
<dbReference type="MIM" id="604898">
    <property type="type" value="gene"/>
</dbReference>
<dbReference type="neXtProt" id="NX_Q9NQP4"/>
<dbReference type="OpenTargets" id="ENSG00000101132"/>
<dbReference type="PharmGKB" id="PA33209"/>
<dbReference type="VEuPathDB" id="HostDB:ENSG00000101132"/>
<dbReference type="eggNOG" id="KOG1760">
    <property type="taxonomic scope" value="Eukaryota"/>
</dbReference>
<dbReference type="GeneTree" id="ENSGT00390000006696"/>
<dbReference type="HOGENOM" id="CLU_130032_0_1_1"/>
<dbReference type="InParanoid" id="Q9NQP4"/>
<dbReference type="OMA" id="NARMDEF"/>
<dbReference type="OrthoDB" id="10250441at2759"/>
<dbReference type="PAN-GO" id="Q9NQP4">
    <property type="GO annotations" value="2 GO annotations based on evolutionary models"/>
</dbReference>
<dbReference type="PhylomeDB" id="Q9NQP4"/>
<dbReference type="TreeFam" id="TF106491"/>
<dbReference type="PathwayCommons" id="Q9NQP4"/>
<dbReference type="Reactome" id="R-HSA-389957">
    <property type="pathway name" value="Prefoldin mediated transfer of substrate to CCT/TriC"/>
</dbReference>
<dbReference type="SignaLink" id="Q9NQP4"/>
<dbReference type="SIGNOR" id="Q9NQP4"/>
<dbReference type="BioGRID-ORCS" id="5203">
    <property type="hits" value="200 hits in 1147 CRISPR screens"/>
</dbReference>
<dbReference type="CD-CODE" id="DEE660B4">
    <property type="entry name" value="Stress granule"/>
</dbReference>
<dbReference type="ChiTaRS" id="PFDN4">
    <property type="organism name" value="human"/>
</dbReference>
<dbReference type="GeneWiki" id="PFDN4"/>
<dbReference type="GenomeRNAi" id="5203"/>
<dbReference type="Pharos" id="Q9NQP4">
    <property type="development level" value="Tbio"/>
</dbReference>
<dbReference type="PRO" id="PR:Q9NQP4"/>
<dbReference type="Proteomes" id="UP000005640">
    <property type="component" value="Chromosome 20"/>
</dbReference>
<dbReference type="RNAct" id="Q9NQP4">
    <property type="molecule type" value="protein"/>
</dbReference>
<dbReference type="Bgee" id="ENSG00000101132">
    <property type="expression patterns" value="Expressed in oocyte and 213 other cell types or tissues"/>
</dbReference>
<dbReference type="ExpressionAtlas" id="Q9NQP4">
    <property type="expression patterns" value="baseline and differential"/>
</dbReference>
<dbReference type="GO" id="GO:0005737">
    <property type="term" value="C:cytoplasm"/>
    <property type="evidence" value="ECO:0000314"/>
    <property type="project" value="UniProtKB"/>
</dbReference>
<dbReference type="GO" id="GO:0005829">
    <property type="term" value="C:cytosol"/>
    <property type="evidence" value="ECO:0000303"/>
    <property type="project" value="UniProtKB"/>
</dbReference>
<dbReference type="GO" id="GO:0005739">
    <property type="term" value="C:mitochondrion"/>
    <property type="evidence" value="ECO:0000314"/>
    <property type="project" value="UniProtKB"/>
</dbReference>
<dbReference type="GO" id="GO:0005634">
    <property type="term" value="C:nucleus"/>
    <property type="evidence" value="ECO:0000314"/>
    <property type="project" value="UniProtKB"/>
</dbReference>
<dbReference type="GO" id="GO:0016272">
    <property type="term" value="C:prefoldin complex"/>
    <property type="evidence" value="ECO:0000314"/>
    <property type="project" value="FlyBase"/>
</dbReference>
<dbReference type="GO" id="GO:0001540">
    <property type="term" value="F:amyloid-beta binding"/>
    <property type="evidence" value="ECO:0000314"/>
    <property type="project" value="FlyBase"/>
</dbReference>
<dbReference type="GO" id="GO:0051087">
    <property type="term" value="F:protein-folding chaperone binding"/>
    <property type="evidence" value="ECO:0000304"/>
    <property type="project" value="UniProtKB"/>
</dbReference>
<dbReference type="GO" id="GO:0051082">
    <property type="term" value="F:unfolded protein binding"/>
    <property type="evidence" value="ECO:0000314"/>
    <property type="project" value="FlyBase"/>
</dbReference>
<dbReference type="GO" id="GO:0061077">
    <property type="term" value="P:chaperone-mediated protein folding"/>
    <property type="evidence" value="ECO:0000303"/>
    <property type="project" value="ComplexPortal"/>
</dbReference>
<dbReference type="GO" id="GO:1905907">
    <property type="term" value="P:negative regulation of amyloid fibril formation"/>
    <property type="evidence" value="ECO:0000314"/>
    <property type="project" value="FlyBase"/>
</dbReference>
<dbReference type="GO" id="GO:0006457">
    <property type="term" value="P:protein folding"/>
    <property type="evidence" value="ECO:0000314"/>
    <property type="project" value="FlyBase"/>
</dbReference>
<dbReference type="CDD" id="cd23165">
    <property type="entry name" value="Prefoldin_4"/>
    <property type="match status" value="1"/>
</dbReference>
<dbReference type="FunFam" id="1.10.287.370:FF:000005">
    <property type="entry name" value="Prefoldin subunit 4"/>
    <property type="match status" value="1"/>
</dbReference>
<dbReference type="Gene3D" id="1.10.287.370">
    <property type="match status" value="1"/>
</dbReference>
<dbReference type="InterPro" id="IPR002777">
    <property type="entry name" value="PFD_beta-like"/>
</dbReference>
<dbReference type="InterPro" id="IPR016661">
    <property type="entry name" value="PFDN4"/>
</dbReference>
<dbReference type="InterPro" id="IPR009053">
    <property type="entry name" value="Prefoldin"/>
</dbReference>
<dbReference type="PANTHER" id="PTHR21100">
    <property type="entry name" value="PREFOLDIN SUBUNIT 4"/>
    <property type="match status" value="1"/>
</dbReference>
<dbReference type="PANTHER" id="PTHR21100:SF9">
    <property type="entry name" value="PREFOLDIN SUBUNIT 4"/>
    <property type="match status" value="1"/>
</dbReference>
<dbReference type="Pfam" id="PF01920">
    <property type="entry name" value="Prefoldin_2"/>
    <property type="match status" value="1"/>
</dbReference>
<dbReference type="PIRSF" id="PIRSF016477">
    <property type="entry name" value="Prefoldin_subunit_4"/>
    <property type="match status" value="1"/>
</dbReference>
<dbReference type="SUPFAM" id="SSF46579">
    <property type="entry name" value="Prefoldin"/>
    <property type="match status" value="1"/>
</dbReference>
<gene>
    <name type="primary">PFDN4</name>
    <name type="synonym">PFD4</name>
</gene>
<organism>
    <name type="scientific">Homo sapiens</name>
    <name type="common">Human</name>
    <dbReference type="NCBI Taxonomy" id="9606"/>
    <lineage>
        <taxon>Eukaryota</taxon>
        <taxon>Metazoa</taxon>
        <taxon>Chordata</taxon>
        <taxon>Craniata</taxon>
        <taxon>Vertebrata</taxon>
        <taxon>Euteleostomi</taxon>
        <taxon>Mammalia</taxon>
        <taxon>Eutheria</taxon>
        <taxon>Euarchontoglires</taxon>
        <taxon>Primates</taxon>
        <taxon>Haplorrhini</taxon>
        <taxon>Catarrhini</taxon>
        <taxon>Hominidae</taxon>
        <taxon>Homo</taxon>
    </lineage>
</organism>
<evidence type="ECO:0000269" key="1">
    <source>
    </source>
</evidence>
<evidence type="ECO:0000269" key="2">
    <source>
    </source>
</evidence>
<evidence type="ECO:0000305" key="3"/>
<evidence type="ECO:0007744" key="4">
    <source>
    </source>
</evidence>
<evidence type="ECO:0007744" key="5">
    <source>
    </source>
</evidence>
<evidence type="ECO:0007744" key="6">
    <source>
    </source>
</evidence>
<evidence type="ECO:0007744" key="7">
    <source>
    </source>
</evidence>
<comment type="function">
    <text evidence="2">Binds specifically to cytosolic chaperonin (c-CPN) and transfers target proteins to it. Binds to nascent polypeptide chain and promotes folding in an environment in which there are many competing pathways for nonnative proteins.</text>
</comment>
<comment type="subunit">
    <text evidence="1">Heterohexamer of two PFD-alpha type and four PFD-beta type subunits. Interacts with URI1; the interaction is phosphorylation-dependent and occurs in a growth-dependent manner.</text>
</comment>
<comment type="interaction">
    <interactant intactId="EBI-357021">
        <id>Q9NQP4</id>
    </interactant>
    <interactant intactId="EBI-10188956">
        <id>O75679</id>
        <label>RFPL3</label>
    </interactant>
    <organismsDiffer>false</organismsDiffer>
    <experiments>3</experiments>
</comment>
<comment type="interaction">
    <interactant intactId="EBI-357021">
        <id>Q9NQP4</id>
    </interactant>
    <interactant intactId="EBI-357430">
        <id>P61758</id>
        <label>VBP1</label>
    </interactant>
    <organismsDiffer>false</organismsDiffer>
    <experiments>9</experiments>
</comment>
<comment type="subcellular location">
    <subcellularLocation>
        <location evidence="1">Nucleus</location>
    </subcellularLocation>
    <subcellularLocation>
        <location evidence="1">Cytoplasm</location>
    </subcellularLocation>
    <subcellularLocation>
        <location evidence="1">Mitochondrion</location>
    </subcellularLocation>
</comment>
<comment type="similarity">
    <text evidence="3">Belongs to the prefoldin subunit beta family.</text>
</comment>
<accession>Q9NQP4</accession>
<accession>Q5TD11</accession>
<accession>Q92779</accession>
<proteinExistence type="evidence at protein level"/>
<sequence length="134" mass="15314">MAATMKKAAAEDVNVTFEDQQKINKFARNTSRITELKEEIEVKKKQLQNLEDACDDIMLADDDCLMIPYQIGDVFISHSQEETQEMLEEAKKNLQEEIDALESRVESIQRVLADLKVQLYAKFGSNINLEADES</sequence>
<reference key="1">
    <citation type="journal article" date="1996" name="Acta Med. Okayama">
        <title>Cloning of cDNA with possible transcription factor activity at the G1-S phase transition in human fibroblast cell lines.</title>
        <authorList>
            <person name="Iijima M."/>
            <person name="Kano Y."/>
            <person name="Nohno T."/>
            <person name="Namba M."/>
        </authorList>
    </citation>
    <scope>NUCLEOTIDE SEQUENCE [MRNA]</scope>
</reference>
<reference key="2">
    <citation type="journal article" date="2001" name="Nature">
        <title>The DNA sequence and comparative analysis of human chromosome 20.</title>
        <authorList>
            <person name="Deloukas P."/>
            <person name="Matthews L.H."/>
            <person name="Ashurst J.L."/>
            <person name="Burton J."/>
            <person name="Gilbert J.G.R."/>
            <person name="Jones M."/>
            <person name="Stavrides G."/>
            <person name="Almeida J.P."/>
            <person name="Babbage A.K."/>
            <person name="Bagguley C.L."/>
            <person name="Bailey J."/>
            <person name="Barlow K.F."/>
            <person name="Bates K.N."/>
            <person name="Beard L.M."/>
            <person name="Beare D.M."/>
            <person name="Beasley O.P."/>
            <person name="Bird C.P."/>
            <person name="Blakey S.E."/>
            <person name="Bridgeman A.M."/>
            <person name="Brown A.J."/>
            <person name="Buck D."/>
            <person name="Burrill W.D."/>
            <person name="Butler A.P."/>
            <person name="Carder C."/>
            <person name="Carter N.P."/>
            <person name="Chapman J.C."/>
            <person name="Clamp M."/>
            <person name="Clark G."/>
            <person name="Clark L.N."/>
            <person name="Clark S.Y."/>
            <person name="Clee C.M."/>
            <person name="Clegg S."/>
            <person name="Cobley V.E."/>
            <person name="Collier R.E."/>
            <person name="Connor R.E."/>
            <person name="Corby N.R."/>
            <person name="Coulson A."/>
            <person name="Coville G.J."/>
            <person name="Deadman R."/>
            <person name="Dhami P.D."/>
            <person name="Dunn M."/>
            <person name="Ellington A.G."/>
            <person name="Frankland J.A."/>
            <person name="Fraser A."/>
            <person name="French L."/>
            <person name="Garner P."/>
            <person name="Grafham D.V."/>
            <person name="Griffiths C."/>
            <person name="Griffiths M.N.D."/>
            <person name="Gwilliam R."/>
            <person name="Hall R.E."/>
            <person name="Hammond S."/>
            <person name="Harley J.L."/>
            <person name="Heath P.D."/>
            <person name="Ho S."/>
            <person name="Holden J.L."/>
            <person name="Howden P.J."/>
            <person name="Huckle E."/>
            <person name="Hunt A.R."/>
            <person name="Hunt S.E."/>
            <person name="Jekosch K."/>
            <person name="Johnson C.M."/>
            <person name="Johnson D."/>
            <person name="Kay M.P."/>
            <person name="Kimberley A.M."/>
            <person name="King A."/>
            <person name="Knights A."/>
            <person name="Laird G.K."/>
            <person name="Lawlor S."/>
            <person name="Lehvaeslaiho M.H."/>
            <person name="Leversha M.A."/>
            <person name="Lloyd C."/>
            <person name="Lloyd D.M."/>
            <person name="Lovell J.D."/>
            <person name="Marsh V.L."/>
            <person name="Martin S.L."/>
            <person name="McConnachie L.J."/>
            <person name="McLay K."/>
            <person name="McMurray A.A."/>
            <person name="Milne S.A."/>
            <person name="Mistry D."/>
            <person name="Moore M.J.F."/>
            <person name="Mullikin J.C."/>
            <person name="Nickerson T."/>
            <person name="Oliver K."/>
            <person name="Parker A."/>
            <person name="Patel R."/>
            <person name="Pearce T.A.V."/>
            <person name="Peck A.I."/>
            <person name="Phillimore B.J.C.T."/>
            <person name="Prathalingam S.R."/>
            <person name="Plumb R.W."/>
            <person name="Ramsay H."/>
            <person name="Rice C.M."/>
            <person name="Ross M.T."/>
            <person name="Scott C.E."/>
            <person name="Sehra H.K."/>
            <person name="Shownkeen R."/>
            <person name="Sims S."/>
            <person name="Skuce C.D."/>
            <person name="Smith M.L."/>
            <person name="Soderlund C."/>
            <person name="Steward C.A."/>
            <person name="Sulston J.E."/>
            <person name="Swann R.M."/>
            <person name="Sycamore N."/>
            <person name="Taylor R."/>
            <person name="Tee L."/>
            <person name="Thomas D.W."/>
            <person name="Thorpe A."/>
            <person name="Tracey A."/>
            <person name="Tromans A.C."/>
            <person name="Vaudin M."/>
            <person name="Wall M."/>
            <person name="Wallis J.M."/>
            <person name="Whitehead S.L."/>
            <person name="Whittaker P."/>
            <person name="Willey D.L."/>
            <person name="Williams L."/>
            <person name="Williams S.A."/>
            <person name="Wilming L."/>
            <person name="Wray P.W."/>
            <person name="Hubbard T."/>
            <person name="Durbin R.M."/>
            <person name="Bentley D.R."/>
            <person name="Beck S."/>
            <person name="Rogers J."/>
        </authorList>
    </citation>
    <scope>NUCLEOTIDE SEQUENCE [LARGE SCALE GENOMIC DNA]</scope>
</reference>
<reference key="3">
    <citation type="journal article" date="2004" name="Genome Res.">
        <title>The status, quality, and expansion of the NIH full-length cDNA project: the Mammalian Gene Collection (MGC).</title>
        <authorList>
            <consortium name="The MGC Project Team"/>
        </authorList>
    </citation>
    <scope>NUCLEOTIDE SEQUENCE [LARGE SCALE MRNA]</scope>
    <source>
        <tissue>Prostate</tissue>
    </source>
</reference>
<reference key="4">
    <citation type="journal article" date="1998" name="Cell">
        <title>Prefoldin, a chaperone that delivers unfolded proteins to cytosolic chaperonin.</title>
        <authorList>
            <person name="Vainberg I.E."/>
            <person name="Lewis S.A."/>
            <person name="Rommelaere H."/>
            <person name="Ampe C."/>
            <person name="Vandekerckhove J."/>
            <person name="Klein H.L."/>
            <person name="Cowan N.J."/>
        </authorList>
    </citation>
    <scope>FUNCTION</scope>
</reference>
<reference key="5">
    <citation type="journal article" date="2007" name="Mol. Cell">
        <title>S6K1-mediated disassembly of mitochondrial URI/PP1gamma complexes activates a negative feedback program that counters S6K1 survival signaling.</title>
        <authorList>
            <person name="Djouder N."/>
            <person name="Metzler S.C."/>
            <person name="Schmidt A."/>
            <person name="Wirbelauer C."/>
            <person name="Gstaiger M."/>
            <person name="Aebersold R."/>
            <person name="Hess D."/>
            <person name="Krek W."/>
        </authorList>
    </citation>
    <scope>INTERACTION WITH URI1</scope>
    <scope>SUBCELLULAR LOCATION</scope>
</reference>
<reference key="6">
    <citation type="journal article" date="2008" name="Proc. Natl. Acad. Sci. U.S.A.">
        <title>A quantitative atlas of mitotic phosphorylation.</title>
        <authorList>
            <person name="Dephoure N."/>
            <person name="Zhou C."/>
            <person name="Villen J."/>
            <person name="Beausoleil S.A."/>
            <person name="Bakalarski C.E."/>
            <person name="Elledge S.J."/>
            <person name="Gygi S.P."/>
        </authorList>
    </citation>
    <scope>PHOSPHORYLATION [LARGE SCALE ANALYSIS] AT SER-125</scope>
    <scope>IDENTIFICATION BY MASS SPECTROMETRY [LARGE SCALE ANALYSIS]</scope>
    <source>
        <tissue>Cervix carcinoma</tissue>
    </source>
</reference>
<reference key="7">
    <citation type="journal article" date="2010" name="Sci. Signal.">
        <title>Quantitative phosphoproteomics reveals widespread full phosphorylation site occupancy during mitosis.</title>
        <authorList>
            <person name="Olsen J.V."/>
            <person name="Vermeulen M."/>
            <person name="Santamaria A."/>
            <person name="Kumar C."/>
            <person name="Miller M.L."/>
            <person name="Jensen L.J."/>
            <person name="Gnad F."/>
            <person name="Cox J."/>
            <person name="Jensen T.S."/>
            <person name="Nigg E.A."/>
            <person name="Brunak S."/>
            <person name="Mann M."/>
        </authorList>
    </citation>
    <scope>PHOSPHORYLATION [LARGE SCALE ANALYSIS] AT SER-125</scope>
    <scope>IDENTIFICATION BY MASS SPECTROMETRY [LARGE SCALE ANALYSIS]</scope>
    <source>
        <tissue>Cervix carcinoma</tissue>
    </source>
</reference>
<reference key="8">
    <citation type="journal article" date="2011" name="BMC Syst. Biol.">
        <title>Initial characterization of the human central proteome.</title>
        <authorList>
            <person name="Burkard T.R."/>
            <person name="Planyavsky M."/>
            <person name="Kaupe I."/>
            <person name="Breitwieser F.P."/>
            <person name="Buerckstuemmer T."/>
            <person name="Bennett K.L."/>
            <person name="Superti-Furga G."/>
            <person name="Colinge J."/>
        </authorList>
    </citation>
    <scope>IDENTIFICATION BY MASS SPECTROMETRY [LARGE SCALE ANALYSIS]</scope>
</reference>
<reference key="9">
    <citation type="journal article" date="2011" name="Sci. Signal.">
        <title>System-wide temporal characterization of the proteome and phosphoproteome of human embryonic stem cell differentiation.</title>
        <authorList>
            <person name="Rigbolt K.T."/>
            <person name="Prokhorova T.A."/>
            <person name="Akimov V."/>
            <person name="Henningsen J."/>
            <person name="Johansen P.T."/>
            <person name="Kratchmarova I."/>
            <person name="Kassem M."/>
            <person name="Mann M."/>
            <person name="Olsen J.V."/>
            <person name="Blagoev B."/>
        </authorList>
    </citation>
    <scope>PHOSPHORYLATION [LARGE SCALE ANALYSIS] AT SER-125</scope>
    <scope>IDENTIFICATION BY MASS SPECTROMETRY [LARGE SCALE ANALYSIS]</scope>
</reference>
<reference key="10">
    <citation type="journal article" date="2012" name="Proc. Natl. Acad. Sci. U.S.A.">
        <title>N-terminal acetylome analyses and functional insights of the N-terminal acetyltransferase NatB.</title>
        <authorList>
            <person name="Van Damme P."/>
            <person name="Lasa M."/>
            <person name="Polevoda B."/>
            <person name="Gazquez C."/>
            <person name="Elosegui-Artola A."/>
            <person name="Kim D.S."/>
            <person name="De Juan-Pardo E."/>
            <person name="Demeyer K."/>
            <person name="Hole K."/>
            <person name="Larrea E."/>
            <person name="Timmerman E."/>
            <person name="Prieto J."/>
            <person name="Arnesen T."/>
            <person name="Sherman F."/>
            <person name="Gevaert K."/>
            <person name="Aldabe R."/>
        </authorList>
    </citation>
    <scope>ACETYLATION [LARGE SCALE ANALYSIS] AT ALA-2</scope>
    <scope>CLEAVAGE OF INITIATOR METHIONINE [LARGE SCALE ANALYSIS]</scope>
    <scope>IDENTIFICATION BY MASS SPECTROMETRY [LARGE SCALE ANALYSIS]</scope>
</reference>
<name>PFD4_HUMAN</name>